<comment type="similarity">
    <text evidence="1">Belongs to the UPF0739 family.</text>
</comment>
<feature type="chain" id="PRO_0000271095" description="UPF0739 protein C1orf74 homolog">
    <location>
        <begin position="1"/>
        <end position="263"/>
    </location>
</feature>
<dbReference type="EMBL" id="BC085897">
    <property type="protein sequence ID" value="AAH85897.1"/>
    <property type="molecule type" value="mRNA"/>
</dbReference>
<dbReference type="RefSeq" id="NP_001096827.1">
    <property type="nucleotide sequence ID" value="NM_001103357.1"/>
</dbReference>
<dbReference type="RefSeq" id="XP_008768037.1">
    <property type="nucleotide sequence ID" value="XM_008769815.1"/>
</dbReference>
<dbReference type="RefSeq" id="XP_017454124.1">
    <property type="nucleotide sequence ID" value="XM_017598635.3"/>
</dbReference>
<dbReference type="RefSeq" id="XP_038946145.1">
    <property type="nucleotide sequence ID" value="XM_039090217.2"/>
</dbReference>
<dbReference type="FunCoup" id="Q5U2R2">
    <property type="interactions" value="1114"/>
</dbReference>
<dbReference type="PaxDb" id="10116-ENSRNOP00000054032"/>
<dbReference type="Ensembl" id="ENSRNOT00000007341.4">
    <property type="protein sequence ID" value="ENSRNOP00000054032.1"/>
    <property type="gene ID" value="ENSRNOG00000005558.4"/>
</dbReference>
<dbReference type="Ensembl" id="ENSRNOT00000097977.1">
    <property type="protein sequence ID" value="ENSRNOP00000084103.1"/>
    <property type="gene ID" value="ENSRNOG00000005558.4"/>
</dbReference>
<dbReference type="Ensembl" id="ENSRNOT00000108080.1">
    <property type="protein sequence ID" value="ENSRNOP00000076619.1"/>
    <property type="gene ID" value="ENSRNOG00000005558.4"/>
</dbReference>
<dbReference type="GeneID" id="100125367"/>
<dbReference type="KEGG" id="rno:100125367"/>
<dbReference type="AGR" id="RGD:1642423"/>
<dbReference type="CTD" id="100125367"/>
<dbReference type="RGD" id="1642423">
    <property type="gene designation" value="C13h1orf74"/>
</dbReference>
<dbReference type="eggNOG" id="ENOG502RZ46">
    <property type="taxonomic scope" value="Eukaryota"/>
</dbReference>
<dbReference type="GeneTree" id="ENSGT00390000002240"/>
<dbReference type="HOGENOM" id="CLU_1156081_0_0_1"/>
<dbReference type="InParanoid" id="Q5U2R2"/>
<dbReference type="OMA" id="YPVTYWF"/>
<dbReference type="OrthoDB" id="10056365at2759"/>
<dbReference type="PhylomeDB" id="Q5U2R2"/>
<dbReference type="TreeFam" id="TF328609"/>
<dbReference type="PRO" id="PR:Q5U2R2"/>
<dbReference type="Proteomes" id="UP000002494">
    <property type="component" value="Chromosome 13"/>
</dbReference>
<dbReference type="Bgee" id="ENSRNOG00000005558">
    <property type="expression patterns" value="Expressed in skeletal muscle tissue and 19 other cell types or tissues"/>
</dbReference>
<dbReference type="InterPro" id="IPR027850">
    <property type="entry name" value="DUF4504"/>
</dbReference>
<dbReference type="PANTHER" id="PTHR31366">
    <property type="entry name" value="UPF0739 PROTEIN C1ORF74"/>
    <property type="match status" value="1"/>
</dbReference>
<dbReference type="PANTHER" id="PTHR31366:SF2">
    <property type="entry name" value="UPF0739 PROTEIN C1ORF74"/>
    <property type="match status" value="1"/>
</dbReference>
<dbReference type="Pfam" id="PF14953">
    <property type="entry name" value="DUF4504"/>
    <property type="match status" value="1"/>
</dbReference>
<organism>
    <name type="scientific">Rattus norvegicus</name>
    <name type="common">Rat</name>
    <dbReference type="NCBI Taxonomy" id="10116"/>
    <lineage>
        <taxon>Eukaryota</taxon>
        <taxon>Metazoa</taxon>
        <taxon>Chordata</taxon>
        <taxon>Craniata</taxon>
        <taxon>Vertebrata</taxon>
        <taxon>Euteleostomi</taxon>
        <taxon>Mammalia</taxon>
        <taxon>Eutheria</taxon>
        <taxon>Euarchontoglires</taxon>
        <taxon>Glires</taxon>
        <taxon>Rodentia</taxon>
        <taxon>Myomorpha</taxon>
        <taxon>Muroidea</taxon>
        <taxon>Muridae</taxon>
        <taxon>Murinae</taxon>
        <taxon>Rattus</taxon>
    </lineage>
</organism>
<sequence>MSTPSPQLLVAAAQRTLGMGKRKCPPRATCLHLAGEVLAVARGLKPAVLYDCNSAGVLALQSYLEELQGLGFLKPGLHILEIGENNLIVSPEYTCQHLEQTLLGTVAFVDVSCSQPHPSVLSLDQLPGLKSLIADIITRFQELLKGVSPGVSYSKLHSSDWNLCTLFGILLGYPVSYTFDLNHGEGNCLTMTPLRVFTAQISWLSGQPPVPLYSFSVPESLFPPLRNFLSAWEKELRTRFRAQNAFADLSISSEVVTLPAVAL</sequence>
<accession>Q5U2R2</accession>
<proteinExistence type="evidence at transcript level"/>
<keyword id="KW-1185">Reference proteome</keyword>
<evidence type="ECO:0000305" key="1"/>
<protein>
    <recommendedName>
        <fullName>UPF0739 protein C1orf74 homolog</fullName>
    </recommendedName>
</protein>
<reference key="1">
    <citation type="journal article" date="2004" name="Genome Res.">
        <title>The status, quality, and expansion of the NIH full-length cDNA project: the Mammalian Gene Collection (MGC).</title>
        <authorList>
            <consortium name="The MGC Project Team"/>
        </authorList>
    </citation>
    <scope>NUCLEOTIDE SEQUENCE [LARGE SCALE MRNA]</scope>
    <source>
        <tissue>Heart</tissue>
    </source>
</reference>
<name>CA074_RAT</name>